<sequence length="456" mass="50044">MALWGGRFSQESSALFKLFNDSLPVDYRLVEQDIVGSIAWAAAITQVGILSQDECEKLQQALKELLSEVEGNPELILASGAEDIHSFVEQSLIAKVGDLGKKLHTGRSRNDQVATDLKLWCKKEGQQQLVLLAKLREALLALAERELDAVMPGYTHLQRAQPVAFGHWCLAYVEMFERDISRLEDALKRADTCPLGTGALAGTAYPMDRYKLAESLGFASPTLNSLDTVSDRDHVVEICSDASISMMHLSRMAEDLIFFNSGEAGFIDLDDEVTSGSSLMPQKKNPDALELIRGKTGRVYGSLIGILTTMKALPLAYNKDMQEDKEGLFDVMDSWSICLEMAALVLSGLKVNRENTLKAAQQGYANSTELADYLVAKGMPFREAHHVVGEVVVHAISEQKPLEDFALEQLQSFASIIEQDVYDCLTIESCLAKREALGGTALPQVQSALAAKKVKK</sequence>
<reference key="1">
    <citation type="submission" date="2008-02" db="EMBL/GenBank/DDBJ databases">
        <title>Complete sequence of Shewanella woodyi ATCC 51908.</title>
        <authorList>
            <consortium name="US DOE Joint Genome Institute"/>
            <person name="Copeland A."/>
            <person name="Lucas S."/>
            <person name="Lapidus A."/>
            <person name="Glavina del Rio T."/>
            <person name="Dalin E."/>
            <person name="Tice H."/>
            <person name="Bruce D."/>
            <person name="Goodwin L."/>
            <person name="Pitluck S."/>
            <person name="Sims D."/>
            <person name="Brettin T."/>
            <person name="Detter J.C."/>
            <person name="Han C."/>
            <person name="Kuske C.R."/>
            <person name="Schmutz J."/>
            <person name="Larimer F."/>
            <person name="Land M."/>
            <person name="Hauser L."/>
            <person name="Kyrpides N."/>
            <person name="Lykidis A."/>
            <person name="Zhao J.-S."/>
            <person name="Richardson P."/>
        </authorList>
    </citation>
    <scope>NUCLEOTIDE SEQUENCE [LARGE SCALE GENOMIC DNA]</scope>
    <source>
        <strain>ATCC 51908 / MS32</strain>
    </source>
</reference>
<dbReference type="EC" id="4.3.2.1" evidence="1"/>
<dbReference type="EMBL" id="CP000961">
    <property type="protein sequence ID" value="ACA84634.1"/>
    <property type="molecule type" value="Genomic_DNA"/>
</dbReference>
<dbReference type="RefSeq" id="WP_012322983.1">
    <property type="nucleotide sequence ID" value="NC_010506.1"/>
</dbReference>
<dbReference type="SMR" id="B1KP64"/>
<dbReference type="STRING" id="392500.Swoo_0333"/>
<dbReference type="KEGG" id="swd:Swoo_0333"/>
<dbReference type="eggNOG" id="COG0165">
    <property type="taxonomic scope" value="Bacteria"/>
</dbReference>
<dbReference type="HOGENOM" id="CLU_027272_2_3_6"/>
<dbReference type="UniPathway" id="UPA00068">
    <property type="reaction ID" value="UER00114"/>
</dbReference>
<dbReference type="Proteomes" id="UP000002168">
    <property type="component" value="Chromosome"/>
</dbReference>
<dbReference type="GO" id="GO:0005829">
    <property type="term" value="C:cytosol"/>
    <property type="evidence" value="ECO:0007669"/>
    <property type="project" value="TreeGrafter"/>
</dbReference>
<dbReference type="GO" id="GO:0004056">
    <property type="term" value="F:argininosuccinate lyase activity"/>
    <property type="evidence" value="ECO:0007669"/>
    <property type="project" value="UniProtKB-UniRule"/>
</dbReference>
<dbReference type="GO" id="GO:0042450">
    <property type="term" value="P:arginine biosynthetic process via ornithine"/>
    <property type="evidence" value="ECO:0007669"/>
    <property type="project" value="InterPro"/>
</dbReference>
<dbReference type="GO" id="GO:0006526">
    <property type="term" value="P:L-arginine biosynthetic process"/>
    <property type="evidence" value="ECO:0007669"/>
    <property type="project" value="UniProtKB-UniRule"/>
</dbReference>
<dbReference type="CDD" id="cd01359">
    <property type="entry name" value="Argininosuccinate_lyase"/>
    <property type="match status" value="1"/>
</dbReference>
<dbReference type="FunFam" id="1.10.40.30:FF:000001">
    <property type="entry name" value="Argininosuccinate lyase"/>
    <property type="match status" value="1"/>
</dbReference>
<dbReference type="FunFam" id="1.20.200.10:FF:000006">
    <property type="entry name" value="Argininosuccinate lyase"/>
    <property type="match status" value="1"/>
</dbReference>
<dbReference type="Gene3D" id="1.10.40.30">
    <property type="entry name" value="Fumarase/aspartase (C-terminal domain)"/>
    <property type="match status" value="1"/>
</dbReference>
<dbReference type="Gene3D" id="1.20.200.10">
    <property type="entry name" value="Fumarase/aspartase (Central domain)"/>
    <property type="match status" value="1"/>
</dbReference>
<dbReference type="Gene3D" id="1.10.275.10">
    <property type="entry name" value="Fumarase/aspartase (N-terminal domain)"/>
    <property type="match status" value="1"/>
</dbReference>
<dbReference type="HAMAP" id="MF_00006">
    <property type="entry name" value="Arg_succ_lyase"/>
    <property type="match status" value="1"/>
</dbReference>
<dbReference type="InterPro" id="IPR029419">
    <property type="entry name" value="Arg_succ_lyase_C"/>
</dbReference>
<dbReference type="InterPro" id="IPR009049">
    <property type="entry name" value="Argininosuccinate_lyase"/>
</dbReference>
<dbReference type="InterPro" id="IPR024083">
    <property type="entry name" value="Fumarase/histidase_N"/>
</dbReference>
<dbReference type="InterPro" id="IPR020557">
    <property type="entry name" value="Fumarate_lyase_CS"/>
</dbReference>
<dbReference type="InterPro" id="IPR000362">
    <property type="entry name" value="Fumarate_lyase_fam"/>
</dbReference>
<dbReference type="InterPro" id="IPR022761">
    <property type="entry name" value="Fumarate_lyase_N"/>
</dbReference>
<dbReference type="InterPro" id="IPR008948">
    <property type="entry name" value="L-Aspartase-like"/>
</dbReference>
<dbReference type="NCBIfam" id="TIGR00838">
    <property type="entry name" value="argH"/>
    <property type="match status" value="1"/>
</dbReference>
<dbReference type="NCBIfam" id="NF008964">
    <property type="entry name" value="PRK12308.1"/>
    <property type="match status" value="1"/>
</dbReference>
<dbReference type="PANTHER" id="PTHR43814">
    <property type="entry name" value="ARGININOSUCCINATE LYASE"/>
    <property type="match status" value="1"/>
</dbReference>
<dbReference type="PANTHER" id="PTHR43814:SF1">
    <property type="entry name" value="ARGININOSUCCINATE LYASE"/>
    <property type="match status" value="1"/>
</dbReference>
<dbReference type="Pfam" id="PF14698">
    <property type="entry name" value="ASL_C2"/>
    <property type="match status" value="1"/>
</dbReference>
<dbReference type="Pfam" id="PF00206">
    <property type="entry name" value="Lyase_1"/>
    <property type="match status" value="1"/>
</dbReference>
<dbReference type="PRINTS" id="PR00145">
    <property type="entry name" value="ARGSUCLYASE"/>
</dbReference>
<dbReference type="PRINTS" id="PR00149">
    <property type="entry name" value="FUMRATELYASE"/>
</dbReference>
<dbReference type="SUPFAM" id="SSF48557">
    <property type="entry name" value="L-aspartase-like"/>
    <property type="match status" value="1"/>
</dbReference>
<dbReference type="PROSITE" id="PS00163">
    <property type="entry name" value="FUMARATE_LYASES"/>
    <property type="match status" value="1"/>
</dbReference>
<accession>B1KP64</accession>
<organism>
    <name type="scientific">Shewanella woodyi (strain ATCC 51908 / MS32)</name>
    <dbReference type="NCBI Taxonomy" id="392500"/>
    <lineage>
        <taxon>Bacteria</taxon>
        <taxon>Pseudomonadati</taxon>
        <taxon>Pseudomonadota</taxon>
        <taxon>Gammaproteobacteria</taxon>
        <taxon>Alteromonadales</taxon>
        <taxon>Shewanellaceae</taxon>
        <taxon>Shewanella</taxon>
    </lineage>
</organism>
<protein>
    <recommendedName>
        <fullName evidence="1">Argininosuccinate lyase</fullName>
        <shortName evidence="1">ASAL</shortName>
        <ecNumber evidence="1">4.3.2.1</ecNumber>
    </recommendedName>
    <alternativeName>
        <fullName evidence="1">Arginosuccinase</fullName>
    </alternativeName>
</protein>
<comment type="catalytic activity">
    <reaction evidence="1">
        <text>2-(N(omega)-L-arginino)succinate = fumarate + L-arginine</text>
        <dbReference type="Rhea" id="RHEA:24020"/>
        <dbReference type="ChEBI" id="CHEBI:29806"/>
        <dbReference type="ChEBI" id="CHEBI:32682"/>
        <dbReference type="ChEBI" id="CHEBI:57472"/>
        <dbReference type="EC" id="4.3.2.1"/>
    </reaction>
</comment>
<comment type="pathway">
    <text evidence="1">Amino-acid biosynthesis; L-arginine biosynthesis; L-arginine from L-ornithine and carbamoyl phosphate: step 3/3.</text>
</comment>
<comment type="subcellular location">
    <subcellularLocation>
        <location evidence="1">Cytoplasm</location>
    </subcellularLocation>
</comment>
<comment type="similarity">
    <text evidence="1">Belongs to the lyase 1 family. Argininosuccinate lyase subfamily.</text>
</comment>
<feature type="chain" id="PRO_1000089117" description="Argininosuccinate lyase">
    <location>
        <begin position="1"/>
        <end position="456"/>
    </location>
</feature>
<name>ARLY_SHEWM</name>
<evidence type="ECO:0000255" key="1">
    <source>
        <dbReference type="HAMAP-Rule" id="MF_00006"/>
    </source>
</evidence>
<proteinExistence type="inferred from homology"/>
<gene>
    <name evidence="1" type="primary">argH</name>
    <name type="ordered locus">Swoo_0333</name>
</gene>
<keyword id="KW-0028">Amino-acid biosynthesis</keyword>
<keyword id="KW-0055">Arginine biosynthesis</keyword>
<keyword id="KW-0963">Cytoplasm</keyword>
<keyword id="KW-0456">Lyase</keyword>
<keyword id="KW-1185">Reference proteome</keyword>